<proteinExistence type="evidence at protein level"/>
<organism>
    <name type="scientific">Austrophasma rawsonvillense</name>
    <name type="common">Gladiator</name>
    <name type="synonym">Heel-walker</name>
    <dbReference type="NCBI Taxonomy" id="253137"/>
    <lineage>
        <taxon>Eukaryota</taxon>
        <taxon>Metazoa</taxon>
        <taxon>Ecdysozoa</taxon>
        <taxon>Arthropoda</taxon>
        <taxon>Hexapoda</taxon>
        <taxon>Insecta</taxon>
        <taxon>Pterygota</taxon>
        <taxon>Neoptera</taxon>
        <taxon>Polyneoptera</taxon>
        <taxon>Mantophasmatodea</taxon>
        <taxon>Austrophasmatidae</taxon>
        <taxon>Austrophasma</taxon>
    </lineage>
</organism>
<sequence>GRGGASNYVRL</sequence>
<keyword id="KW-0027">Amidation</keyword>
<keyword id="KW-0903">Direct protein sequencing</keyword>
<keyword id="KW-0527">Neuropeptide</keyword>
<keyword id="KW-0964">Secreted</keyword>
<comment type="function">
    <text evidence="1">FMRFamides and FMRFamide-like peptides are neuropeptides.</text>
</comment>
<comment type="subcellular location">
    <subcellularLocation>
        <location evidence="6">Secreted</location>
    </subcellularLocation>
</comment>
<comment type="similarity">
    <text evidence="2">Belongs to the FARP (FMRF amide related peptide) family.</text>
</comment>
<accession>B3A0A7</accession>
<feature type="peptide" id="PRO_0000421539" description="Extended FMRFamide-9" evidence="3">
    <location>
        <begin position="1"/>
        <end position="11"/>
    </location>
</feature>
<feature type="modified residue" description="Leucine amide" evidence="3">
    <location>
        <position position="11"/>
    </location>
</feature>
<feature type="unsure residue" description="L or I" evidence="3">
    <location>
        <position position="11"/>
    </location>
</feature>
<evidence type="ECO:0000250" key="1">
    <source>
        <dbReference type="UniProtKB" id="P34405"/>
    </source>
</evidence>
<evidence type="ECO:0000255" key="2"/>
<evidence type="ECO:0000269" key="3">
    <source>
    </source>
</evidence>
<evidence type="ECO:0000303" key="4">
    <source>
    </source>
</evidence>
<evidence type="ECO:0000305" key="5"/>
<evidence type="ECO:0000305" key="6">
    <source>
    </source>
</evidence>
<dbReference type="GO" id="GO:0005576">
    <property type="term" value="C:extracellular region"/>
    <property type="evidence" value="ECO:0007669"/>
    <property type="project" value="UniProtKB-SubCell"/>
</dbReference>
<dbReference type="GO" id="GO:0007218">
    <property type="term" value="P:neuropeptide signaling pathway"/>
    <property type="evidence" value="ECO:0007669"/>
    <property type="project" value="UniProtKB-KW"/>
</dbReference>
<protein>
    <recommendedName>
        <fullName evidence="4">Extended FMRFamide-9</fullName>
        <shortName evidence="4">FMRFa-9</shortName>
    </recommendedName>
</protein>
<name>FAR9_AUSRA</name>
<reference evidence="5" key="1">
    <citation type="journal article" date="2012" name="Syst. Biol.">
        <title>Peptidomics-based phylogeny and biogeography of Mantophasmatodea (Hexapoda).</title>
        <authorList>
            <person name="Predel R."/>
            <person name="Neupert S."/>
            <person name="Huetteroth W."/>
            <person name="Kahnt J."/>
            <person name="Waidelich D."/>
            <person name="Roth S."/>
        </authorList>
    </citation>
    <scope>PROTEIN SEQUENCE</scope>
    <scope>AMIDATION AT LEU-11</scope>
    <source>
        <tissue evidence="3">Thoracic perisympathetic organs</tissue>
    </source>
</reference>